<evidence type="ECO:0000255" key="1">
    <source>
        <dbReference type="HAMAP-Rule" id="MF_00048"/>
    </source>
</evidence>
<feature type="chain" id="PRO_0000336195" description="UPF0102 protein lpp3065">
    <location>
        <begin position="1"/>
        <end position="118"/>
    </location>
</feature>
<sequence>MTQEKGKFAEQLALNYLKENGLALVMQNYHCRLGEIDLIMREGSYLVFIEVRSRSNMNFGGGLASITYEKKQKIIKATSHYMIKYRIQDKFPIRFDVISIDGKSNKITWLKNAFDAGC</sequence>
<organism>
    <name type="scientific">Legionella pneumophila (strain Paris)</name>
    <dbReference type="NCBI Taxonomy" id="297246"/>
    <lineage>
        <taxon>Bacteria</taxon>
        <taxon>Pseudomonadati</taxon>
        <taxon>Pseudomonadota</taxon>
        <taxon>Gammaproteobacteria</taxon>
        <taxon>Legionellales</taxon>
        <taxon>Legionellaceae</taxon>
        <taxon>Legionella</taxon>
    </lineage>
</organism>
<comment type="similarity">
    <text evidence="1">Belongs to the UPF0102 family.</text>
</comment>
<gene>
    <name type="ordered locus">lpp3065</name>
</gene>
<name>Y3065_LEGPA</name>
<accession>Q5X0N1</accession>
<protein>
    <recommendedName>
        <fullName evidence="1">UPF0102 protein lpp3065</fullName>
    </recommendedName>
</protein>
<proteinExistence type="inferred from homology"/>
<dbReference type="EMBL" id="CR628336">
    <property type="protein sequence ID" value="CAH14218.1"/>
    <property type="molecule type" value="Genomic_DNA"/>
</dbReference>
<dbReference type="RefSeq" id="WP_011947884.1">
    <property type="nucleotide sequence ID" value="NC_006368.1"/>
</dbReference>
<dbReference type="SMR" id="Q5X0N1"/>
<dbReference type="KEGG" id="lpp:lpp3065"/>
<dbReference type="LegioList" id="lpp3065"/>
<dbReference type="HOGENOM" id="CLU_115353_1_0_6"/>
<dbReference type="GO" id="GO:0003676">
    <property type="term" value="F:nucleic acid binding"/>
    <property type="evidence" value="ECO:0007669"/>
    <property type="project" value="InterPro"/>
</dbReference>
<dbReference type="CDD" id="cd20736">
    <property type="entry name" value="PoNe_Nuclease"/>
    <property type="match status" value="1"/>
</dbReference>
<dbReference type="Gene3D" id="3.40.1350.10">
    <property type="match status" value="1"/>
</dbReference>
<dbReference type="HAMAP" id="MF_00048">
    <property type="entry name" value="UPF0102"/>
    <property type="match status" value="1"/>
</dbReference>
<dbReference type="InterPro" id="IPR011335">
    <property type="entry name" value="Restrct_endonuc-II-like"/>
</dbReference>
<dbReference type="InterPro" id="IPR011856">
    <property type="entry name" value="tRNA_endonuc-like_dom_sf"/>
</dbReference>
<dbReference type="InterPro" id="IPR003509">
    <property type="entry name" value="UPF0102_YraN-like"/>
</dbReference>
<dbReference type="NCBIfam" id="NF009150">
    <property type="entry name" value="PRK12497.1-3"/>
    <property type="match status" value="1"/>
</dbReference>
<dbReference type="NCBIfam" id="TIGR00252">
    <property type="entry name" value="YraN family protein"/>
    <property type="match status" value="1"/>
</dbReference>
<dbReference type="PANTHER" id="PTHR34039">
    <property type="entry name" value="UPF0102 PROTEIN YRAN"/>
    <property type="match status" value="1"/>
</dbReference>
<dbReference type="PANTHER" id="PTHR34039:SF1">
    <property type="entry name" value="UPF0102 PROTEIN YRAN"/>
    <property type="match status" value="1"/>
</dbReference>
<dbReference type="Pfam" id="PF02021">
    <property type="entry name" value="UPF0102"/>
    <property type="match status" value="1"/>
</dbReference>
<dbReference type="SUPFAM" id="SSF52980">
    <property type="entry name" value="Restriction endonuclease-like"/>
    <property type="match status" value="1"/>
</dbReference>
<reference key="1">
    <citation type="journal article" date="2004" name="Nat. Genet.">
        <title>Evidence in the Legionella pneumophila genome for exploitation of host cell functions and high genome plasticity.</title>
        <authorList>
            <person name="Cazalet C."/>
            <person name="Rusniok C."/>
            <person name="Brueggemann H."/>
            <person name="Zidane N."/>
            <person name="Magnier A."/>
            <person name="Ma L."/>
            <person name="Tichit M."/>
            <person name="Jarraud S."/>
            <person name="Bouchier C."/>
            <person name="Vandenesch F."/>
            <person name="Kunst F."/>
            <person name="Etienne J."/>
            <person name="Glaser P."/>
            <person name="Buchrieser C."/>
        </authorList>
    </citation>
    <scope>NUCLEOTIDE SEQUENCE [LARGE SCALE GENOMIC DNA]</scope>
    <source>
        <strain>Paris</strain>
    </source>
</reference>